<protein>
    <recommendedName>
        <fullName evidence="3">Chloronitrobenzene nitroreductase</fullName>
    </recommendedName>
    <alternativeName>
        <fullName evidence="5">Nitrobenzene nitroreductase</fullName>
        <ecNumber evidence="5">1.7.1.16</ecNumber>
    </alternativeName>
</protein>
<name>CNBA_COMTE</name>
<proteinExistence type="evidence at protein level"/>
<accession>Q5XW77</accession>
<reference key="1">
    <citation type="journal article" date="2005" name="Arch. Microbiol.">
        <title>A novel 2-aminophenol 1,6-dioxygenase involved in the degradation of p-chloronitrobenzene by Comamonas strain CNB-1: purification, properties, genetic cloning and expression in Escherichia coli.</title>
        <authorList>
            <person name="Wu J.F."/>
            <person name="Sun C.W."/>
            <person name="Jiang C.Y."/>
            <person name="Liu Z.P."/>
            <person name="Liu S.J."/>
        </authorList>
    </citation>
    <scope>NUCLEOTIDE SEQUENCE [GENOMIC DNA]</scope>
    <source>
        <strain>CNB-1</strain>
        <plasmid evidence="6">pCNB</plasmid>
    </source>
</reference>
<reference key="2">
    <citation type="journal article" date="2006" name="Appl. Environ. Microbiol.">
        <title>Novel partial reductive pathway for 4-chloronitrobenzene and nitrobenzene degradation in Comamonas sp. strain CNB-1.</title>
        <authorList>
            <person name="Wu J.F."/>
            <person name="Jiang C.Y."/>
            <person name="Wang B.J."/>
            <person name="Ma Y.F."/>
            <person name="Liu Z.P."/>
            <person name="Liu S.J."/>
        </authorList>
    </citation>
    <scope>NUCLEOTIDE SEQUENCE [GENOMIC DNA]</scope>
    <scope>FUNCTION</scope>
    <scope>CATALYTIC ACTIVITY</scope>
    <scope>PATHWAY</scope>
    <source>
        <strain>CNB-1</strain>
        <plasmid evidence="6">pCNB</plasmid>
    </source>
</reference>
<reference key="3">
    <citation type="journal article" date="2007" name="Appl. Environ. Microbiol.">
        <title>Nucleotide sequence of plasmid pCNB1 from Comamonas strain CNB-1 reveals novel genetic organization and evolution for 4-chloronitrobenzene degradation.</title>
        <authorList>
            <person name="Ma Y.F."/>
            <person name="Wu J.F."/>
            <person name="Wang S.Y."/>
            <person name="Jiang C.Y."/>
            <person name="Zhang Y."/>
            <person name="Qi S.W."/>
            <person name="Liu L."/>
            <person name="Zhao G.P."/>
            <person name="Liu S.J."/>
        </authorList>
    </citation>
    <scope>NUCLEOTIDE SEQUENCE [GENOMIC DNA]</scope>
    <source>
        <plasmid evidence="6">pCNB</plasmid>
    </source>
</reference>
<organism>
    <name type="scientific">Comamonas testosteroni</name>
    <name type="common">Pseudomonas testosteroni</name>
    <dbReference type="NCBI Taxonomy" id="285"/>
    <lineage>
        <taxon>Bacteria</taxon>
        <taxon>Pseudomonadati</taxon>
        <taxon>Pseudomonadota</taxon>
        <taxon>Betaproteobacteria</taxon>
        <taxon>Burkholderiales</taxon>
        <taxon>Comamonadaceae</taxon>
        <taxon>Comamonas</taxon>
    </lineage>
</organism>
<keyword id="KW-0058">Aromatic hydrocarbons catabolism</keyword>
<keyword id="KW-0285">Flavoprotein</keyword>
<keyword id="KW-0288">FMN</keyword>
<keyword id="KW-0521">NADP</keyword>
<keyword id="KW-0547">Nucleotide-binding</keyword>
<keyword id="KW-0560">Oxidoreductase</keyword>
<keyword id="KW-0614">Plasmid</keyword>
<feature type="chain" id="PRO_0000441895" description="Chloronitrobenzene nitroreductase">
    <location>
        <begin position="1"/>
        <end position="227"/>
    </location>
</feature>
<feature type="binding site" evidence="1">
    <location>
        <begin position="14"/>
        <end position="18"/>
    </location>
    <ligand>
        <name>FMN</name>
        <dbReference type="ChEBI" id="CHEBI:58210"/>
    </ligand>
</feature>
<feature type="binding site" evidence="1">
    <location>
        <position position="44"/>
    </location>
    <ligand>
        <name>NADP(+)</name>
        <dbReference type="ChEBI" id="CHEBI:58349"/>
    </ligand>
</feature>
<feature type="binding site" evidence="1">
    <location>
        <begin position="172"/>
        <end position="173"/>
    </location>
    <ligand>
        <name>FMN</name>
        <dbReference type="ChEBI" id="CHEBI:58210"/>
    </ligand>
</feature>
<feature type="binding site" evidence="1">
    <location>
        <position position="215"/>
    </location>
    <ligand>
        <name>FMN</name>
        <dbReference type="ChEBI" id="CHEBI:58210"/>
    </ligand>
</feature>
<comment type="function">
    <text evidence="2">Involved in the biodegradation of chlorinated nitroaromatic compounds. Catalyzes the reduction of 4-chloronitrobenzene to yield 1-hydroxylamino-4-chlorobenzene. Probably also able to catalyze the two-electron reduction of nitrobenzene (NB) to produce a nitrosobenzene (NOB) intermediate, which is immediately reduced to hydroxylaminobenzene (HAB) by a second two-electron transfer.</text>
</comment>
<comment type="catalytic activity">
    <reaction evidence="5">
        <text>N-phenylhydroxylamine + 2 NADP(+) + H2O = nitrobenzene + 2 NADPH + 2 H(+)</text>
        <dbReference type="Rhea" id="RHEA:52884"/>
        <dbReference type="ChEBI" id="CHEBI:15377"/>
        <dbReference type="ChEBI" id="CHEBI:15378"/>
        <dbReference type="ChEBI" id="CHEBI:27798"/>
        <dbReference type="ChEBI" id="CHEBI:28902"/>
        <dbReference type="ChEBI" id="CHEBI:57783"/>
        <dbReference type="ChEBI" id="CHEBI:58349"/>
        <dbReference type="EC" id="1.7.1.16"/>
    </reaction>
</comment>
<comment type="cofactor">
    <cofactor evidence="1">
        <name>FMN</name>
        <dbReference type="ChEBI" id="CHEBI:58210"/>
    </cofactor>
    <text evidence="1">Binds 1 FMN per subunit.</text>
</comment>
<comment type="pathway">
    <text evidence="5">Xenobiotic degradation; nitrobenzene degradation.</text>
</comment>
<comment type="pathway">
    <text evidence="5">Xenobiotic degradation; 4-chloronitrobenzene degradation.</text>
</comment>
<comment type="similarity">
    <text evidence="4">Belongs to the nitroreductase family.</text>
</comment>
<geneLocation type="plasmid" evidence="6">
    <name>pCNB</name>
</geneLocation>
<dbReference type="EC" id="1.7.1.16" evidence="5"/>
<dbReference type="EMBL" id="EF079106">
    <property type="protein sequence ID" value="AAU43738.1"/>
    <property type="molecule type" value="Genomic_DNA"/>
</dbReference>
<dbReference type="RefSeq" id="YP_001967716.1">
    <property type="nucleotide sequence ID" value="NC_010935.1"/>
</dbReference>
<dbReference type="SMR" id="Q5XW77"/>
<dbReference type="PATRIC" id="fig|688245.4.peg.77"/>
<dbReference type="UniPathway" id="UPA00923"/>
<dbReference type="UniPathway" id="UPA01033"/>
<dbReference type="GO" id="GO:0018546">
    <property type="term" value="F:nitrobenzene nitroreductase activity"/>
    <property type="evidence" value="ECO:0007669"/>
    <property type="project" value="UniProtKB-EC"/>
</dbReference>
<dbReference type="GO" id="GO:0000166">
    <property type="term" value="F:nucleotide binding"/>
    <property type="evidence" value="ECO:0007669"/>
    <property type="project" value="UniProtKB-KW"/>
</dbReference>
<dbReference type="GO" id="GO:0009056">
    <property type="term" value="P:catabolic process"/>
    <property type="evidence" value="ECO:0007669"/>
    <property type="project" value="UniProtKB-KW"/>
</dbReference>
<dbReference type="CDD" id="cd02136">
    <property type="entry name" value="PnbA_NfnB-like"/>
    <property type="match status" value="1"/>
</dbReference>
<dbReference type="Gene3D" id="3.40.109.10">
    <property type="entry name" value="NADH Oxidase"/>
    <property type="match status" value="1"/>
</dbReference>
<dbReference type="InterPro" id="IPR029479">
    <property type="entry name" value="Nitroreductase"/>
</dbReference>
<dbReference type="InterPro" id="IPR000415">
    <property type="entry name" value="Nitroreductase-like"/>
</dbReference>
<dbReference type="PANTHER" id="PTHR43673">
    <property type="entry name" value="NAD(P)H NITROREDUCTASE YDGI-RELATED"/>
    <property type="match status" value="1"/>
</dbReference>
<dbReference type="PANTHER" id="PTHR43673:SF2">
    <property type="entry name" value="NITROREDUCTASE"/>
    <property type="match status" value="1"/>
</dbReference>
<dbReference type="Pfam" id="PF00881">
    <property type="entry name" value="Nitroreductase"/>
    <property type="match status" value="1"/>
</dbReference>
<dbReference type="SUPFAM" id="SSF55469">
    <property type="entry name" value="FMN-dependent nitroreductase-like"/>
    <property type="match status" value="1"/>
</dbReference>
<gene>
    <name evidence="3" type="primary">cnbA</name>
</gene>
<sequence>MPTSPFIDDLIRDRRTKRGFLDQPVPIEMVKDILSVAKYTPSSSNTQPWRCYVLTGEARERVTTAAVEAYRGAPEGLKPEYSYFPEPLHEPYATRFNSFRGQLGDAEGCCRSDITGRRRYVERQFRFFDAPVGLIFTMDRRLEWASFICYGCFLQNIMLAAKGRGLDTCPQGLWSLQHPVLRTELNLPDDQMVVAGMSLGWADNSMAVNQMSMSRVELEEFTTFVHE</sequence>
<evidence type="ECO:0000250" key="1">
    <source>
        <dbReference type="UniProtKB" id="A0R6D0"/>
    </source>
</evidence>
<evidence type="ECO:0000269" key="2">
    <source>
    </source>
</evidence>
<evidence type="ECO:0000303" key="3">
    <source>
    </source>
</evidence>
<evidence type="ECO:0000305" key="4"/>
<evidence type="ECO:0000305" key="5">
    <source>
    </source>
</evidence>
<evidence type="ECO:0000312" key="6">
    <source>
        <dbReference type="EMBL" id="AAU43738.1"/>
    </source>
</evidence>